<dbReference type="EC" id="2.8.1.8" evidence="1"/>
<dbReference type="EMBL" id="CR848038">
    <property type="protein sequence ID" value="CAH64342.1"/>
    <property type="molecule type" value="Genomic_DNA"/>
</dbReference>
<dbReference type="RefSeq" id="WP_011097413.1">
    <property type="nucleotide sequence ID" value="NC_004552.2"/>
</dbReference>
<dbReference type="SMR" id="Q5L4V4"/>
<dbReference type="GeneID" id="93024459"/>
<dbReference type="KEGG" id="cab:CAB903"/>
<dbReference type="eggNOG" id="COG0320">
    <property type="taxonomic scope" value="Bacteria"/>
</dbReference>
<dbReference type="HOGENOM" id="CLU_033144_2_1_0"/>
<dbReference type="OrthoDB" id="9787898at2"/>
<dbReference type="UniPathway" id="UPA00538">
    <property type="reaction ID" value="UER00593"/>
</dbReference>
<dbReference type="Proteomes" id="UP000001012">
    <property type="component" value="Chromosome"/>
</dbReference>
<dbReference type="GO" id="GO:0005737">
    <property type="term" value="C:cytoplasm"/>
    <property type="evidence" value="ECO:0007669"/>
    <property type="project" value="UniProtKB-SubCell"/>
</dbReference>
<dbReference type="GO" id="GO:0051539">
    <property type="term" value="F:4 iron, 4 sulfur cluster binding"/>
    <property type="evidence" value="ECO:0007669"/>
    <property type="project" value="UniProtKB-UniRule"/>
</dbReference>
<dbReference type="GO" id="GO:0016992">
    <property type="term" value="F:lipoate synthase activity"/>
    <property type="evidence" value="ECO:0007669"/>
    <property type="project" value="UniProtKB-UniRule"/>
</dbReference>
<dbReference type="GO" id="GO:0046872">
    <property type="term" value="F:metal ion binding"/>
    <property type="evidence" value="ECO:0007669"/>
    <property type="project" value="UniProtKB-KW"/>
</dbReference>
<dbReference type="CDD" id="cd01335">
    <property type="entry name" value="Radical_SAM"/>
    <property type="match status" value="1"/>
</dbReference>
<dbReference type="FunFam" id="3.20.20.70:FF:000186">
    <property type="entry name" value="Lipoyl synthase"/>
    <property type="match status" value="1"/>
</dbReference>
<dbReference type="Gene3D" id="3.20.20.70">
    <property type="entry name" value="Aldolase class I"/>
    <property type="match status" value="1"/>
</dbReference>
<dbReference type="HAMAP" id="MF_00206">
    <property type="entry name" value="Lipoyl_synth"/>
    <property type="match status" value="1"/>
</dbReference>
<dbReference type="InterPro" id="IPR013785">
    <property type="entry name" value="Aldolase_TIM"/>
</dbReference>
<dbReference type="InterPro" id="IPR006638">
    <property type="entry name" value="Elp3/MiaA/NifB-like_rSAM"/>
</dbReference>
<dbReference type="InterPro" id="IPR003698">
    <property type="entry name" value="Lipoyl_synth"/>
</dbReference>
<dbReference type="InterPro" id="IPR007197">
    <property type="entry name" value="rSAM"/>
</dbReference>
<dbReference type="NCBIfam" id="TIGR00510">
    <property type="entry name" value="lipA"/>
    <property type="match status" value="1"/>
</dbReference>
<dbReference type="NCBIfam" id="NF004019">
    <property type="entry name" value="PRK05481.1"/>
    <property type="match status" value="1"/>
</dbReference>
<dbReference type="NCBIfam" id="NF009544">
    <property type="entry name" value="PRK12928.1"/>
    <property type="match status" value="1"/>
</dbReference>
<dbReference type="PANTHER" id="PTHR10949">
    <property type="entry name" value="LIPOYL SYNTHASE"/>
    <property type="match status" value="1"/>
</dbReference>
<dbReference type="PANTHER" id="PTHR10949:SF0">
    <property type="entry name" value="LIPOYL SYNTHASE, MITOCHONDRIAL"/>
    <property type="match status" value="1"/>
</dbReference>
<dbReference type="Pfam" id="PF04055">
    <property type="entry name" value="Radical_SAM"/>
    <property type="match status" value="1"/>
</dbReference>
<dbReference type="PIRSF" id="PIRSF005963">
    <property type="entry name" value="Lipoyl_synth"/>
    <property type="match status" value="1"/>
</dbReference>
<dbReference type="SFLD" id="SFLDF00271">
    <property type="entry name" value="lipoyl_synthase"/>
    <property type="match status" value="1"/>
</dbReference>
<dbReference type="SFLD" id="SFLDG01058">
    <property type="entry name" value="lipoyl_synthase_like"/>
    <property type="match status" value="1"/>
</dbReference>
<dbReference type="SMART" id="SM00729">
    <property type="entry name" value="Elp3"/>
    <property type="match status" value="1"/>
</dbReference>
<dbReference type="SUPFAM" id="SSF102114">
    <property type="entry name" value="Radical SAM enzymes"/>
    <property type="match status" value="1"/>
</dbReference>
<dbReference type="PROSITE" id="PS51918">
    <property type="entry name" value="RADICAL_SAM"/>
    <property type="match status" value="1"/>
</dbReference>
<protein>
    <recommendedName>
        <fullName evidence="1">Lipoyl synthase</fullName>
        <ecNumber evidence="1">2.8.1.8</ecNumber>
    </recommendedName>
    <alternativeName>
        <fullName evidence="1">Lip-syn</fullName>
        <shortName evidence="1">LS</shortName>
    </alternativeName>
    <alternativeName>
        <fullName evidence="1">Lipoate synthase</fullName>
    </alternativeName>
    <alternativeName>
        <fullName evidence="1">Lipoic acid synthase</fullName>
    </alternativeName>
    <alternativeName>
        <fullName evidence="1">Sulfur insertion protein LipA</fullName>
    </alternativeName>
</protein>
<keyword id="KW-0004">4Fe-4S</keyword>
<keyword id="KW-0963">Cytoplasm</keyword>
<keyword id="KW-0408">Iron</keyword>
<keyword id="KW-0411">Iron-sulfur</keyword>
<keyword id="KW-0479">Metal-binding</keyword>
<keyword id="KW-0949">S-adenosyl-L-methionine</keyword>
<keyword id="KW-0808">Transferase</keyword>
<sequence>MNDTPNDIQKPKQGKRFSERLPHWLRQALPKGSVFDFTDKTIKRTGMATVCEEALCPNRTRCWSRKTATYLALGDACSRRCGFCNIDFTKKPLPPDPDEPRKIAESAKILQLKHIVLTMVARDDLEDGGASCLVRIIDTLHKELPESTVEMLASDFQGNVDALHTLLDSGLTIYNHNVETVERLTPVVRHKATYRRSLFMLEQAALYLPDLKIKSGIMVGLGEQESEVKQTLKDLADHGVRIVTIGQYLRPSRLHIPVKSYVTPETFDYYRRVGESLGLFVYAGPFVRSSFNADIVLQDMENKQSKMAKT</sequence>
<name>LIPA_CHLAB</name>
<reference key="1">
    <citation type="journal article" date="2005" name="Genome Res.">
        <title>The Chlamydophila abortus genome sequence reveals an array of variable proteins that contribute to interspecies variation.</title>
        <authorList>
            <person name="Thomson N.R."/>
            <person name="Yeats C."/>
            <person name="Bell K."/>
            <person name="Holden M.T.G."/>
            <person name="Bentley S.D."/>
            <person name="Livingstone M."/>
            <person name="Cerdeno-Tarraga A.-M."/>
            <person name="Harris B."/>
            <person name="Doggett J."/>
            <person name="Ormond D."/>
            <person name="Mungall K."/>
            <person name="Clarke K."/>
            <person name="Feltwell T."/>
            <person name="Hance Z."/>
            <person name="Sanders M."/>
            <person name="Quail M.A."/>
            <person name="Price C."/>
            <person name="Barrell B.G."/>
            <person name="Parkhill J."/>
            <person name="Longbottom D."/>
        </authorList>
    </citation>
    <scope>NUCLEOTIDE SEQUENCE [LARGE SCALE GENOMIC DNA]</scope>
    <source>
        <strain>DSM 27085 / S26/3</strain>
    </source>
</reference>
<comment type="function">
    <text evidence="1">Catalyzes the radical-mediated insertion of two sulfur atoms into the C-6 and C-8 positions of the octanoyl moiety bound to the lipoyl domains of lipoate-dependent enzymes, thereby converting the octanoylated domains into lipoylated derivatives.</text>
</comment>
<comment type="catalytic activity">
    <reaction evidence="1">
        <text>[[Fe-S] cluster scaffold protein carrying a second [4Fe-4S](2+) cluster] + N(6)-octanoyl-L-lysyl-[protein] + 2 oxidized [2Fe-2S]-[ferredoxin] + 2 S-adenosyl-L-methionine + 4 H(+) = [[Fe-S] cluster scaffold protein] + N(6)-[(R)-dihydrolipoyl]-L-lysyl-[protein] + 4 Fe(3+) + 2 hydrogen sulfide + 2 5'-deoxyadenosine + 2 L-methionine + 2 reduced [2Fe-2S]-[ferredoxin]</text>
        <dbReference type="Rhea" id="RHEA:16585"/>
        <dbReference type="Rhea" id="RHEA-COMP:9928"/>
        <dbReference type="Rhea" id="RHEA-COMP:10000"/>
        <dbReference type="Rhea" id="RHEA-COMP:10001"/>
        <dbReference type="Rhea" id="RHEA-COMP:10475"/>
        <dbReference type="Rhea" id="RHEA-COMP:14568"/>
        <dbReference type="Rhea" id="RHEA-COMP:14569"/>
        <dbReference type="ChEBI" id="CHEBI:15378"/>
        <dbReference type="ChEBI" id="CHEBI:17319"/>
        <dbReference type="ChEBI" id="CHEBI:29034"/>
        <dbReference type="ChEBI" id="CHEBI:29919"/>
        <dbReference type="ChEBI" id="CHEBI:33722"/>
        <dbReference type="ChEBI" id="CHEBI:33737"/>
        <dbReference type="ChEBI" id="CHEBI:33738"/>
        <dbReference type="ChEBI" id="CHEBI:57844"/>
        <dbReference type="ChEBI" id="CHEBI:59789"/>
        <dbReference type="ChEBI" id="CHEBI:78809"/>
        <dbReference type="ChEBI" id="CHEBI:83100"/>
        <dbReference type="EC" id="2.8.1.8"/>
    </reaction>
</comment>
<comment type="cofactor">
    <cofactor evidence="1">
        <name>[4Fe-4S] cluster</name>
        <dbReference type="ChEBI" id="CHEBI:49883"/>
    </cofactor>
    <text evidence="1">Binds 2 [4Fe-4S] clusters per subunit. One cluster is coordinated with 3 cysteines and an exchangeable S-adenosyl-L-methionine.</text>
</comment>
<comment type="pathway">
    <text evidence="1">Protein modification; protein lipoylation via endogenous pathway; protein N(6)-(lipoyl)lysine from octanoyl-[acyl-carrier-protein]: step 2/2.</text>
</comment>
<comment type="subcellular location">
    <subcellularLocation>
        <location evidence="1">Cytoplasm</location>
    </subcellularLocation>
</comment>
<comment type="similarity">
    <text evidence="1">Belongs to the radical SAM superfamily. Lipoyl synthase family.</text>
</comment>
<organism>
    <name type="scientific">Chlamydia abortus (strain DSM 27085 / S26/3)</name>
    <name type="common">Chlamydophila abortus</name>
    <dbReference type="NCBI Taxonomy" id="218497"/>
    <lineage>
        <taxon>Bacteria</taxon>
        <taxon>Pseudomonadati</taxon>
        <taxon>Chlamydiota</taxon>
        <taxon>Chlamydiia</taxon>
        <taxon>Chlamydiales</taxon>
        <taxon>Chlamydiaceae</taxon>
        <taxon>Chlamydia/Chlamydophila group</taxon>
        <taxon>Chlamydia</taxon>
    </lineage>
</organism>
<proteinExistence type="inferred from homology"/>
<accession>Q5L4V4</accession>
<gene>
    <name evidence="1" type="primary">lipA</name>
    <name type="ordered locus">CAB903</name>
</gene>
<evidence type="ECO:0000255" key="1">
    <source>
        <dbReference type="HAMAP-Rule" id="MF_00206"/>
    </source>
</evidence>
<evidence type="ECO:0000255" key="2">
    <source>
        <dbReference type="PROSITE-ProRule" id="PRU01266"/>
    </source>
</evidence>
<feature type="chain" id="PRO_1000012206" description="Lipoyl synthase">
    <location>
        <begin position="1"/>
        <end position="310"/>
    </location>
</feature>
<feature type="domain" description="Radical SAM core" evidence="2">
    <location>
        <begin position="63"/>
        <end position="280"/>
    </location>
</feature>
<feature type="binding site" evidence="1">
    <location>
        <position position="51"/>
    </location>
    <ligand>
        <name>[4Fe-4S] cluster</name>
        <dbReference type="ChEBI" id="CHEBI:49883"/>
        <label>1</label>
    </ligand>
</feature>
<feature type="binding site" evidence="1">
    <location>
        <position position="56"/>
    </location>
    <ligand>
        <name>[4Fe-4S] cluster</name>
        <dbReference type="ChEBI" id="CHEBI:49883"/>
        <label>1</label>
    </ligand>
</feature>
<feature type="binding site" evidence="1">
    <location>
        <position position="62"/>
    </location>
    <ligand>
        <name>[4Fe-4S] cluster</name>
        <dbReference type="ChEBI" id="CHEBI:49883"/>
        <label>1</label>
    </ligand>
</feature>
<feature type="binding site" evidence="1">
    <location>
        <position position="77"/>
    </location>
    <ligand>
        <name>[4Fe-4S] cluster</name>
        <dbReference type="ChEBI" id="CHEBI:49883"/>
        <label>2</label>
        <note>4Fe-4S-S-AdoMet</note>
    </ligand>
</feature>
<feature type="binding site" evidence="1">
    <location>
        <position position="81"/>
    </location>
    <ligand>
        <name>[4Fe-4S] cluster</name>
        <dbReference type="ChEBI" id="CHEBI:49883"/>
        <label>2</label>
        <note>4Fe-4S-S-AdoMet</note>
    </ligand>
</feature>
<feature type="binding site" evidence="1">
    <location>
        <position position="84"/>
    </location>
    <ligand>
        <name>[4Fe-4S] cluster</name>
        <dbReference type="ChEBI" id="CHEBI:49883"/>
        <label>2</label>
        <note>4Fe-4S-S-AdoMet</note>
    </ligand>
</feature>
<feature type="binding site" evidence="1">
    <location>
        <position position="290"/>
    </location>
    <ligand>
        <name>[4Fe-4S] cluster</name>
        <dbReference type="ChEBI" id="CHEBI:49883"/>
        <label>1</label>
    </ligand>
</feature>